<gene>
    <name evidence="1" type="primary">pth</name>
    <name type="ordered locus">LBJ_1281</name>
</gene>
<comment type="function">
    <text evidence="1">Hydrolyzes ribosome-free peptidyl-tRNAs (with 1 or more amino acids incorporated), which drop off the ribosome during protein synthesis, or as a result of ribosome stalling.</text>
</comment>
<comment type="function">
    <text evidence="1">Catalyzes the release of premature peptidyl moieties from peptidyl-tRNA molecules trapped in stalled 50S ribosomal subunits, and thus maintains levels of free tRNAs and 50S ribosomes.</text>
</comment>
<comment type="catalytic activity">
    <reaction evidence="1">
        <text>an N-acyl-L-alpha-aminoacyl-tRNA + H2O = an N-acyl-L-amino acid + a tRNA + H(+)</text>
        <dbReference type="Rhea" id="RHEA:54448"/>
        <dbReference type="Rhea" id="RHEA-COMP:10123"/>
        <dbReference type="Rhea" id="RHEA-COMP:13883"/>
        <dbReference type="ChEBI" id="CHEBI:15377"/>
        <dbReference type="ChEBI" id="CHEBI:15378"/>
        <dbReference type="ChEBI" id="CHEBI:59874"/>
        <dbReference type="ChEBI" id="CHEBI:78442"/>
        <dbReference type="ChEBI" id="CHEBI:138191"/>
        <dbReference type="EC" id="3.1.1.29"/>
    </reaction>
</comment>
<comment type="subunit">
    <text evidence="1">Monomer.</text>
</comment>
<comment type="subcellular location">
    <subcellularLocation>
        <location evidence="1">Cytoplasm</location>
    </subcellularLocation>
</comment>
<comment type="similarity">
    <text evidence="1">Belongs to the PTH family.</text>
</comment>
<organism>
    <name type="scientific">Leptospira borgpetersenii serovar Hardjo-bovis (strain JB197)</name>
    <dbReference type="NCBI Taxonomy" id="355277"/>
    <lineage>
        <taxon>Bacteria</taxon>
        <taxon>Pseudomonadati</taxon>
        <taxon>Spirochaetota</taxon>
        <taxon>Spirochaetia</taxon>
        <taxon>Leptospirales</taxon>
        <taxon>Leptospiraceae</taxon>
        <taxon>Leptospira</taxon>
    </lineage>
</organism>
<evidence type="ECO:0000255" key="1">
    <source>
        <dbReference type="HAMAP-Rule" id="MF_00083"/>
    </source>
</evidence>
<name>PTH_LEPBJ</name>
<sequence length="189" mass="21196">MANLKLLLVGIGNPGPKYAYNRHNIGFVILDSLLNSSSASYQTNSKYSLARTDEEGVTIFYLKPLEFMNLSGKAVAEIAKKNGISPENILVIHDEIDFEFGKLKLKEGGGHAGHNGLRNIVEKLGTNTFFRLRFGVGKPSTASEVSDYVLSNFFPEEKEKIPELVQVSLQKIYDWVRERKNEFQKPSDI</sequence>
<accession>Q04TA4</accession>
<keyword id="KW-0963">Cytoplasm</keyword>
<keyword id="KW-0378">Hydrolase</keyword>
<keyword id="KW-0694">RNA-binding</keyword>
<keyword id="KW-0820">tRNA-binding</keyword>
<reference key="1">
    <citation type="journal article" date="2006" name="Proc. Natl. Acad. Sci. U.S.A.">
        <title>Genome reduction in Leptospira borgpetersenii reflects limited transmission potential.</title>
        <authorList>
            <person name="Bulach D.M."/>
            <person name="Zuerner R.L."/>
            <person name="Wilson P."/>
            <person name="Seemann T."/>
            <person name="McGrath A."/>
            <person name="Cullen P.A."/>
            <person name="Davis J."/>
            <person name="Johnson M."/>
            <person name="Kuczek E."/>
            <person name="Alt D.P."/>
            <person name="Peterson-Burch B."/>
            <person name="Coppel R.L."/>
            <person name="Rood J.I."/>
            <person name="Davies J.K."/>
            <person name="Adler B."/>
        </authorList>
    </citation>
    <scope>NUCLEOTIDE SEQUENCE [LARGE SCALE GENOMIC DNA]</scope>
    <source>
        <strain>JB197</strain>
    </source>
</reference>
<dbReference type="EC" id="3.1.1.29" evidence="1"/>
<dbReference type="EMBL" id="CP000350">
    <property type="protein sequence ID" value="ABJ75866.1"/>
    <property type="molecule type" value="Genomic_DNA"/>
</dbReference>
<dbReference type="RefSeq" id="WP_011670160.1">
    <property type="nucleotide sequence ID" value="NC_008510.1"/>
</dbReference>
<dbReference type="SMR" id="Q04TA4"/>
<dbReference type="KEGG" id="lbj:LBJ_1281"/>
<dbReference type="HOGENOM" id="CLU_062456_3_1_12"/>
<dbReference type="Proteomes" id="UP000000656">
    <property type="component" value="Chromosome 1"/>
</dbReference>
<dbReference type="GO" id="GO:0005737">
    <property type="term" value="C:cytoplasm"/>
    <property type="evidence" value="ECO:0007669"/>
    <property type="project" value="UniProtKB-SubCell"/>
</dbReference>
<dbReference type="GO" id="GO:0004045">
    <property type="term" value="F:peptidyl-tRNA hydrolase activity"/>
    <property type="evidence" value="ECO:0007669"/>
    <property type="project" value="UniProtKB-UniRule"/>
</dbReference>
<dbReference type="GO" id="GO:0000049">
    <property type="term" value="F:tRNA binding"/>
    <property type="evidence" value="ECO:0007669"/>
    <property type="project" value="UniProtKB-UniRule"/>
</dbReference>
<dbReference type="GO" id="GO:0006515">
    <property type="term" value="P:protein quality control for misfolded or incompletely synthesized proteins"/>
    <property type="evidence" value="ECO:0007669"/>
    <property type="project" value="UniProtKB-UniRule"/>
</dbReference>
<dbReference type="GO" id="GO:0072344">
    <property type="term" value="P:rescue of stalled ribosome"/>
    <property type="evidence" value="ECO:0007669"/>
    <property type="project" value="UniProtKB-UniRule"/>
</dbReference>
<dbReference type="CDD" id="cd00462">
    <property type="entry name" value="PTH"/>
    <property type="match status" value="1"/>
</dbReference>
<dbReference type="FunFam" id="3.40.50.1470:FF:000001">
    <property type="entry name" value="Peptidyl-tRNA hydrolase"/>
    <property type="match status" value="1"/>
</dbReference>
<dbReference type="Gene3D" id="3.40.50.1470">
    <property type="entry name" value="Peptidyl-tRNA hydrolase"/>
    <property type="match status" value="1"/>
</dbReference>
<dbReference type="HAMAP" id="MF_00083">
    <property type="entry name" value="Pept_tRNA_hydro_bact"/>
    <property type="match status" value="1"/>
</dbReference>
<dbReference type="InterPro" id="IPR001328">
    <property type="entry name" value="Pept_tRNA_hydro"/>
</dbReference>
<dbReference type="InterPro" id="IPR018171">
    <property type="entry name" value="Pept_tRNA_hydro_CS"/>
</dbReference>
<dbReference type="InterPro" id="IPR036416">
    <property type="entry name" value="Pept_tRNA_hydro_sf"/>
</dbReference>
<dbReference type="NCBIfam" id="TIGR00447">
    <property type="entry name" value="pth"/>
    <property type="match status" value="1"/>
</dbReference>
<dbReference type="PANTHER" id="PTHR17224">
    <property type="entry name" value="PEPTIDYL-TRNA HYDROLASE"/>
    <property type="match status" value="1"/>
</dbReference>
<dbReference type="PANTHER" id="PTHR17224:SF1">
    <property type="entry name" value="PEPTIDYL-TRNA HYDROLASE"/>
    <property type="match status" value="1"/>
</dbReference>
<dbReference type="Pfam" id="PF01195">
    <property type="entry name" value="Pept_tRNA_hydro"/>
    <property type="match status" value="1"/>
</dbReference>
<dbReference type="SUPFAM" id="SSF53178">
    <property type="entry name" value="Peptidyl-tRNA hydrolase-like"/>
    <property type="match status" value="1"/>
</dbReference>
<dbReference type="PROSITE" id="PS01195">
    <property type="entry name" value="PEPT_TRNA_HYDROL_1"/>
    <property type="match status" value="1"/>
</dbReference>
<dbReference type="PROSITE" id="PS01196">
    <property type="entry name" value="PEPT_TRNA_HYDROL_2"/>
    <property type="match status" value="1"/>
</dbReference>
<proteinExistence type="inferred from homology"/>
<feature type="chain" id="PRO_1000010605" description="Peptidyl-tRNA hydrolase">
    <location>
        <begin position="1"/>
        <end position="189"/>
    </location>
</feature>
<feature type="active site" description="Proton acceptor" evidence="1">
    <location>
        <position position="23"/>
    </location>
</feature>
<feature type="binding site" evidence="1">
    <location>
        <position position="18"/>
    </location>
    <ligand>
        <name>tRNA</name>
        <dbReference type="ChEBI" id="CHEBI:17843"/>
    </ligand>
</feature>
<feature type="binding site" evidence="1">
    <location>
        <position position="67"/>
    </location>
    <ligand>
        <name>tRNA</name>
        <dbReference type="ChEBI" id="CHEBI:17843"/>
    </ligand>
</feature>
<feature type="binding site" evidence="1">
    <location>
        <position position="69"/>
    </location>
    <ligand>
        <name>tRNA</name>
        <dbReference type="ChEBI" id="CHEBI:17843"/>
    </ligand>
</feature>
<feature type="binding site" evidence="1">
    <location>
        <position position="115"/>
    </location>
    <ligand>
        <name>tRNA</name>
        <dbReference type="ChEBI" id="CHEBI:17843"/>
    </ligand>
</feature>
<feature type="site" description="Discriminates between blocked and unblocked aminoacyl-tRNA" evidence="1">
    <location>
        <position position="13"/>
    </location>
</feature>
<feature type="site" description="Stabilizes the basic form of H active site to accept a proton" evidence="1">
    <location>
        <position position="94"/>
    </location>
</feature>
<protein>
    <recommendedName>
        <fullName evidence="1">Peptidyl-tRNA hydrolase</fullName>
        <shortName evidence="1">Pth</shortName>
        <ecNumber evidence="1">3.1.1.29</ecNumber>
    </recommendedName>
</protein>